<organism>
    <name type="scientific">Mycoplasma pneumoniae (strain ATCC 29342 / M129 / Subtype 1)</name>
    <name type="common">Mycoplasmoides pneumoniae</name>
    <dbReference type="NCBI Taxonomy" id="272634"/>
    <lineage>
        <taxon>Bacteria</taxon>
        <taxon>Bacillati</taxon>
        <taxon>Mycoplasmatota</taxon>
        <taxon>Mycoplasmoidales</taxon>
        <taxon>Mycoplasmoidaceae</taxon>
        <taxon>Mycoplasmoides</taxon>
    </lineage>
</organism>
<dbReference type="EC" id="2.1.1.72" evidence="5"/>
<dbReference type="EMBL" id="U00089">
    <property type="protein sequence ID" value="AAB96142.1"/>
    <property type="molecule type" value="Genomic_DNA"/>
</dbReference>
<dbReference type="PIR" id="S73820">
    <property type="entry name" value="S73820"/>
</dbReference>
<dbReference type="RefSeq" id="NP_110030.1">
    <property type="nucleotide sequence ID" value="NC_000912.1"/>
</dbReference>
<dbReference type="RefSeq" id="WP_010874698.1">
    <property type="nucleotide sequence ID" value="NC_000912.1"/>
</dbReference>
<dbReference type="SMR" id="P75436"/>
<dbReference type="IntAct" id="P75436">
    <property type="interactions" value="2"/>
</dbReference>
<dbReference type="STRING" id="272634.MPN_342"/>
<dbReference type="REBASE" id="154996">
    <property type="entry name" value="M.VscVS12ORF1031P"/>
</dbReference>
<dbReference type="REBASE" id="203439">
    <property type="entry name" value="M.Lpl434ORF2272P"/>
</dbReference>
<dbReference type="REBASE" id="290905">
    <property type="entry name" value="M.Msa27082ORF3559P"/>
</dbReference>
<dbReference type="REBASE" id="6703">
    <property type="entry name" value="M.MpnII"/>
</dbReference>
<dbReference type="REBASE" id="767817">
    <property type="entry name" value="M.SspSPORF2374P"/>
</dbReference>
<dbReference type="EnsemblBacteria" id="AAB96142">
    <property type="protein sequence ID" value="AAB96142"/>
    <property type="gene ID" value="MPN_342"/>
</dbReference>
<dbReference type="KEGG" id="mpn:MPN_342"/>
<dbReference type="PATRIC" id="fig|272634.6.peg.366"/>
<dbReference type="HOGENOM" id="CLU_013049_0_1_14"/>
<dbReference type="OrthoDB" id="9814572at2"/>
<dbReference type="BioCyc" id="MPNE272634:G1GJ3-541-MONOMER"/>
<dbReference type="PRO" id="PR:P75436"/>
<dbReference type="Proteomes" id="UP000000808">
    <property type="component" value="Chromosome"/>
</dbReference>
<dbReference type="GO" id="GO:0003677">
    <property type="term" value="F:DNA binding"/>
    <property type="evidence" value="ECO:0007669"/>
    <property type="project" value="UniProtKB-KW"/>
</dbReference>
<dbReference type="GO" id="GO:0008170">
    <property type="term" value="F:N-methyltransferase activity"/>
    <property type="evidence" value="ECO:0007669"/>
    <property type="project" value="InterPro"/>
</dbReference>
<dbReference type="GO" id="GO:0009007">
    <property type="term" value="F:site-specific DNA-methyltransferase (adenine-specific) activity"/>
    <property type="evidence" value="ECO:0007669"/>
    <property type="project" value="UniProtKB-EC"/>
</dbReference>
<dbReference type="GO" id="GO:0009307">
    <property type="term" value="P:DNA restriction-modification system"/>
    <property type="evidence" value="ECO:0007669"/>
    <property type="project" value="UniProtKB-KW"/>
</dbReference>
<dbReference type="GO" id="GO:0032259">
    <property type="term" value="P:methylation"/>
    <property type="evidence" value="ECO:0007669"/>
    <property type="project" value="UniProtKB-KW"/>
</dbReference>
<dbReference type="Gene3D" id="1.20.1260.30">
    <property type="match status" value="1"/>
</dbReference>
<dbReference type="Gene3D" id="3.40.50.150">
    <property type="entry name" value="Vaccinia Virus protein VP39"/>
    <property type="match status" value="1"/>
</dbReference>
<dbReference type="InterPro" id="IPR022749">
    <property type="entry name" value="D12N6_MeTrfase_N"/>
</dbReference>
<dbReference type="InterPro" id="IPR051537">
    <property type="entry name" value="DNA_Adenine_Mtase"/>
</dbReference>
<dbReference type="InterPro" id="IPR003356">
    <property type="entry name" value="DNA_methylase_A-5"/>
</dbReference>
<dbReference type="InterPro" id="IPR002052">
    <property type="entry name" value="DNA_methylase_N6_adenine_CS"/>
</dbReference>
<dbReference type="InterPro" id="IPR004546">
    <property type="entry name" value="Restrct_endonuc_T1M"/>
</dbReference>
<dbReference type="InterPro" id="IPR029063">
    <property type="entry name" value="SAM-dependent_MTases_sf"/>
</dbReference>
<dbReference type="InterPro" id="IPR038333">
    <property type="entry name" value="T1MK-like_N_sf"/>
</dbReference>
<dbReference type="NCBIfam" id="TIGR00497">
    <property type="entry name" value="hsdM"/>
    <property type="match status" value="1"/>
</dbReference>
<dbReference type="PANTHER" id="PTHR42933:SF1">
    <property type="entry name" value="SITE-SPECIFIC DNA-METHYLTRANSFERASE (ADENINE-SPECIFIC)"/>
    <property type="match status" value="1"/>
</dbReference>
<dbReference type="PANTHER" id="PTHR42933">
    <property type="entry name" value="SLR6095 PROTEIN"/>
    <property type="match status" value="1"/>
</dbReference>
<dbReference type="Pfam" id="PF12161">
    <property type="entry name" value="HsdM_N"/>
    <property type="match status" value="1"/>
</dbReference>
<dbReference type="Pfam" id="PF02384">
    <property type="entry name" value="N6_Mtase"/>
    <property type="match status" value="1"/>
</dbReference>
<dbReference type="PRINTS" id="PR00507">
    <property type="entry name" value="N12N6MTFRASE"/>
</dbReference>
<dbReference type="SUPFAM" id="SSF53335">
    <property type="entry name" value="S-adenosyl-L-methionine-dependent methyltransferases"/>
    <property type="match status" value="1"/>
</dbReference>
<dbReference type="PROSITE" id="PS00092">
    <property type="entry name" value="N6_MTASE"/>
    <property type="match status" value="1"/>
</dbReference>
<sequence>MEKKRTEQRNGVEKKIWEIADKLRGTIDGWDFKSYVLIGLFYRFLSENLCKYFNDSERRNNPDFSYENLTDDYEAIDALKDAAIASKGFFIKPSQLFQNVVKSIRENKNNEDLNTTLRDIFDDIEKSTELGDGRSKESFKGLFKDFNVSEVKLGSTLTIRTEKLKELLTSIDTMELDEFEKNSIDAFGDAYEFLISMYAQNAGKSGGEFFTPQDISELLARIAIGKKDTVDDVYDMACGSGSLLLQVIKVLGKEKTSLVSYYGQEINHTTYNLCRMNMILHNIDYANFNIINADTLTTKEWEKHYVNCSNENGFEVVVSNPPYSISWAGDKKSNLVSDVRFKDAGTLAPNSKADLAFVLHALYVLGQEGTAAIVCFPGILYREGKEQTIRKYLVDQNFVDAVIQLPSNLFSTTSIATSILVLKKNRDKKDPIFFIDGSNEFVREKKNNRLSPKNIEKIVDCFNSKKEEANFAKSVERDKIRESNYDLTVGKYVNSEAEKEELDIKVLNHSIDEIVDKQKDLRTKIKDIIQDIKVDFDNIDINN</sequence>
<evidence type="ECO:0000250" key="1">
    <source>
        <dbReference type="UniProtKB" id="Q89Z59"/>
    </source>
</evidence>
<evidence type="ECO:0000269" key="2">
    <source>
    </source>
</evidence>
<evidence type="ECO:0000303" key="3">
    <source>
    </source>
</evidence>
<evidence type="ECO:0000305" key="4"/>
<evidence type="ECO:0000305" key="5">
    <source>
    </source>
</evidence>
<gene>
    <name type="ordered locus">MPN_342</name>
    <name type="ORF">H91_orf543</name>
    <name type="ORF">MP494</name>
</gene>
<proteinExistence type="evidence at protein level"/>
<reference key="1">
    <citation type="journal article" date="1996" name="Nucleic Acids Res.">
        <title>Complete sequence analysis of the genome of the bacterium Mycoplasma pneumoniae.</title>
        <authorList>
            <person name="Himmelreich R."/>
            <person name="Hilbert H."/>
            <person name="Plagens H."/>
            <person name="Pirkl E."/>
            <person name="Li B.-C."/>
            <person name="Herrmann R."/>
        </authorList>
    </citation>
    <scope>NUCLEOTIDE SEQUENCE [LARGE SCALE GENOMIC DNA]</scope>
    <source>
        <strain>ATCC 29342 / M129 / Subtype 1</strain>
    </source>
</reference>
<reference key="2">
    <citation type="journal article" date="2003" name="Nucleic Acids Res.">
        <title>A nomenclature for restriction enzymes, DNA methyltransferases, homing endonucleases and their genes.</title>
        <authorList>
            <person name="Roberts R.J."/>
            <person name="Belfort M."/>
            <person name="Bestor T."/>
            <person name="Bhagwat A.S."/>
            <person name="Bickle T.A."/>
            <person name="Bitinaite J."/>
            <person name="Blumenthal R.M."/>
            <person name="Degtyarev S.K."/>
            <person name="Dryden D.T."/>
            <person name="Dybvig K."/>
            <person name="Firman K."/>
            <person name="Gromova E.S."/>
            <person name="Gumport R.I."/>
            <person name="Halford S.E."/>
            <person name="Hattman S."/>
            <person name="Heitman J."/>
            <person name="Hornby D.P."/>
            <person name="Janulaitis A."/>
            <person name="Jeltsch A."/>
            <person name="Josephsen J."/>
            <person name="Kiss A."/>
            <person name="Klaenhammer T.R."/>
            <person name="Kobayashi I."/>
            <person name="Kong H."/>
            <person name="Krueger D.H."/>
            <person name="Lacks S."/>
            <person name="Marinus M.G."/>
            <person name="Miyahara M."/>
            <person name="Morgan R.D."/>
            <person name="Murray N.E."/>
            <person name="Nagaraja V."/>
            <person name="Piekarowicz A."/>
            <person name="Pingoud A."/>
            <person name="Raleigh E."/>
            <person name="Rao D.N."/>
            <person name="Reich N."/>
            <person name="Repin V.E."/>
            <person name="Selker E.U."/>
            <person name="Shaw P.C."/>
            <person name="Stein D.C."/>
            <person name="Stoddard B.L."/>
            <person name="Szybalski W."/>
            <person name="Trautner T.A."/>
            <person name="Van Etten J.L."/>
            <person name="Vitor J.M."/>
            <person name="Wilson G.G."/>
            <person name="Xu S.Y."/>
        </authorList>
    </citation>
    <scope>NOMENCLATURE</scope>
    <scope>SUBTYPE</scope>
</reference>
<reference key="3">
    <citation type="journal article" date="2013" name="PLoS Genet.">
        <title>Comprehensive methylome characterization of Mycoplasma genitalium and Mycoplasma pneumoniae at single-base resolution.</title>
        <authorList>
            <person name="Lluch-Senar M."/>
            <person name="Luong K."/>
            <person name="Llorens-Rico V."/>
            <person name="Delgado J."/>
            <person name="Fang G."/>
            <person name="Spittle K."/>
            <person name="Clark T.A."/>
            <person name="Schadt E."/>
            <person name="Turner S.W."/>
            <person name="Korlach J."/>
            <person name="Serrano L."/>
        </authorList>
    </citation>
    <scope>FUNCTION</scope>
    <scope>GENOME METHYLATION</scope>
    <scope>SUBUNIT</scope>
    <scope>INDUCTION</scope>
    <scope>DNA-BINDING</scope>
    <source>
        <strain>ATCC 29342 / M129 / Subtype 1</strain>
    </source>
</reference>
<feature type="chain" id="PRO_0000088028" description="Type I restriction enzyme MpnII methylase subunit">
    <location>
        <begin position="1"/>
        <end position="543"/>
    </location>
</feature>
<feature type="binding site" evidence="1">
    <location>
        <begin position="208"/>
        <end position="213"/>
    </location>
    <ligand>
        <name>S-adenosyl-L-methionine</name>
        <dbReference type="ChEBI" id="CHEBI:59789"/>
    </ligand>
</feature>
<feature type="binding site" evidence="1">
    <location>
        <begin position="240"/>
        <end position="242"/>
    </location>
    <ligand>
        <name>S-adenosyl-L-methionine</name>
        <dbReference type="ChEBI" id="CHEBI:59789"/>
    </ligand>
</feature>
<feature type="binding site" evidence="1">
    <location>
        <position position="265"/>
    </location>
    <ligand>
        <name>S-adenosyl-L-methionine</name>
        <dbReference type="ChEBI" id="CHEBI:59789"/>
    </ligand>
</feature>
<name>T1MD_MYCPN</name>
<comment type="function">
    <text evidence="5">The subtype gamma methyltransferase (M) subunit of a type I restriction enzyme. The M and S subunits together form a methyltransferase (MTase) that probably methylates A-2 on the top strand and A-3 on the bottom strand of the sequence 5'-GAN(7)TAY-3'. As the bacterial DNA is methylated on this sequence and this is the only type I methylase in the genome, it is probably responsible for all of the methylation on this site in the genome. The R subunit has multiple frameshifts and is probably not expressed in this bacteria.</text>
</comment>
<comment type="catalytic activity">
    <reaction evidence="5">
        <text>a 2'-deoxyadenosine in DNA + S-adenosyl-L-methionine = an N(6)-methyl-2'-deoxyadenosine in DNA + S-adenosyl-L-homocysteine + H(+)</text>
        <dbReference type="Rhea" id="RHEA:15197"/>
        <dbReference type="Rhea" id="RHEA-COMP:12418"/>
        <dbReference type="Rhea" id="RHEA-COMP:12419"/>
        <dbReference type="ChEBI" id="CHEBI:15378"/>
        <dbReference type="ChEBI" id="CHEBI:57856"/>
        <dbReference type="ChEBI" id="CHEBI:59789"/>
        <dbReference type="ChEBI" id="CHEBI:90615"/>
        <dbReference type="ChEBI" id="CHEBI:90616"/>
        <dbReference type="EC" id="2.1.1.72"/>
    </reaction>
</comment>
<comment type="subunit">
    <text evidence="5">The methyltransferase is composed of M and S polypeptides.</text>
</comment>
<comment type="induction">
    <text evidence="2">Detected at low levels after 6 and 96 hours growth, there are fewer copies at 96 hours (at protein level).</text>
</comment>
<comment type="similarity">
    <text evidence="4">Belongs to the N(4)/N(6)-methyltransferase family.</text>
</comment>
<protein>
    <recommendedName>
        <fullName evidence="4">Type I restriction enzyme MpnII methylase subunit</fullName>
        <shortName>M protein</shortName>
        <ecNumber evidence="5">2.1.1.72</ecNumber>
    </recommendedName>
    <alternativeName>
        <fullName evidence="3">Type I methyltransferase M.MpnII</fullName>
        <shortName evidence="3">M.MpnII</shortName>
    </alternativeName>
</protein>
<keyword id="KW-0238">DNA-binding</keyword>
<keyword id="KW-0489">Methyltransferase</keyword>
<keyword id="KW-1185">Reference proteome</keyword>
<keyword id="KW-0680">Restriction system</keyword>
<keyword id="KW-0949">S-adenosyl-L-methionine</keyword>
<keyword id="KW-0808">Transferase</keyword>
<accession>P75436</accession>